<sequence length="349" mass="38289">MNSYYTEENHGPFELINIGPLPLEEGRCMPECLLAVAVHGALNADKSNAILVPTWYSGTSKAMEQIYIGEGRALDPSKYCIIVVNQIGNGLSSSASNTGGSLAGPGFANVRIGDDVSAQHTLLTEYFGIESLALVVGGSMGAQQTYEWAVRYPDFVKRAAAIAGTARNSEHDFLFTEILIEAITTDPAFQAGLYRSSSAVAAGLERHAKLWTLMGWSPEFFRTGRHKALGFESMQMFVDGFMKRYFAPMDPNNLLTMAWKWQRGDVSRHTGGDLAKALGRIKAKTYVMPISHDQFFTVDDCLSEQKMIPNSEFRPLRSIDGHLGLFGTDAQMLDQLDAHLAELLSSPAY</sequence>
<name>MEKB_PSEVE</name>
<gene>
    <name evidence="4" type="primary">mekB</name>
</gene>
<protein>
    <recommendedName>
        <fullName evidence="5">Ethyl acetate hydrolase</fullName>
        <ecNumber evidence="2">3.1.1.113</ecNumber>
    </recommendedName>
</protein>
<keyword id="KW-0002">3D-structure</keyword>
<keyword id="KW-0378">Hydrolase</keyword>
<organism>
    <name type="scientific">Pseudomonas veronii</name>
    <dbReference type="NCBI Taxonomy" id="76761"/>
    <lineage>
        <taxon>Bacteria</taxon>
        <taxon>Pseudomonadati</taxon>
        <taxon>Pseudomonadota</taxon>
        <taxon>Gammaproteobacteria</taxon>
        <taxon>Pseudomonadales</taxon>
        <taxon>Pseudomonadaceae</taxon>
        <taxon>Pseudomonas</taxon>
    </lineage>
</organism>
<accession>Q0MRG5</accession>
<proteinExistence type="evidence at protein level"/>
<feature type="chain" id="PRO_0000457712" description="Ethyl acetate hydrolase">
    <location>
        <begin position="1"/>
        <end position="349"/>
    </location>
</feature>
<feature type="domain" description="AB hydrolase-1" evidence="1">
    <location>
        <begin position="67"/>
        <end position="300"/>
    </location>
</feature>
<feature type="active site" description="Nucleophile" evidence="6">
    <location>
        <position position="139"/>
    </location>
</feature>
<feature type="active site" evidence="6">
    <location>
        <position position="293"/>
    </location>
</feature>
<feature type="active site" evidence="6">
    <location>
        <position position="322"/>
    </location>
</feature>
<feature type="strand" evidence="9">
    <location>
        <begin position="4"/>
        <end position="6"/>
    </location>
</feature>
<feature type="helix" evidence="10">
    <location>
        <begin position="7"/>
        <end position="10"/>
    </location>
</feature>
<feature type="strand" evidence="10">
    <location>
        <begin position="14"/>
        <end position="17"/>
    </location>
</feature>
<feature type="strand" evidence="10">
    <location>
        <begin position="28"/>
        <end position="30"/>
    </location>
</feature>
<feature type="strand" evidence="10">
    <location>
        <begin position="33"/>
        <end position="40"/>
    </location>
</feature>
<feature type="strand" evidence="10">
    <location>
        <begin position="49"/>
        <end position="53"/>
    </location>
</feature>
<feature type="helix" evidence="10">
    <location>
        <begin position="60"/>
        <end position="67"/>
    </location>
</feature>
<feature type="strand" evidence="10">
    <location>
        <begin position="72"/>
        <end position="74"/>
    </location>
</feature>
<feature type="turn" evidence="10">
    <location>
        <begin position="76"/>
        <end position="78"/>
    </location>
</feature>
<feature type="strand" evidence="10">
    <location>
        <begin position="80"/>
        <end position="84"/>
    </location>
</feature>
<feature type="strand" evidence="10">
    <location>
        <begin position="89"/>
        <end position="93"/>
    </location>
</feature>
<feature type="turn" evidence="10">
    <location>
        <begin position="95"/>
        <end position="97"/>
    </location>
</feature>
<feature type="helix" evidence="10">
    <location>
        <begin position="100"/>
        <end position="102"/>
    </location>
</feature>
<feature type="helix" evidence="10">
    <location>
        <begin position="104"/>
        <end position="106"/>
    </location>
</feature>
<feature type="helix" evidence="10">
    <location>
        <begin position="112"/>
        <end position="125"/>
    </location>
</feature>
<feature type="strand" evidence="10">
    <location>
        <begin position="132"/>
        <end position="138"/>
    </location>
</feature>
<feature type="helix" evidence="10">
    <location>
        <begin position="140"/>
        <end position="151"/>
    </location>
</feature>
<feature type="turn" evidence="10">
    <location>
        <begin position="153"/>
        <end position="155"/>
    </location>
</feature>
<feature type="strand" evidence="10">
    <location>
        <begin position="156"/>
        <end position="163"/>
    </location>
</feature>
<feature type="helix" evidence="10">
    <location>
        <begin position="170"/>
        <end position="184"/>
    </location>
</feature>
<feature type="helix" evidence="10">
    <location>
        <begin position="187"/>
        <end position="192"/>
    </location>
</feature>
<feature type="helix" evidence="10">
    <location>
        <begin position="197"/>
        <end position="200"/>
    </location>
</feature>
<feature type="helix" evidence="10">
    <location>
        <begin position="201"/>
        <end position="215"/>
    </location>
</feature>
<feature type="helix" evidence="10">
    <location>
        <begin position="218"/>
        <end position="222"/>
    </location>
</feature>
<feature type="helix" evidence="10">
    <location>
        <begin position="225"/>
        <end position="228"/>
    </location>
</feature>
<feature type="helix" evidence="10">
    <location>
        <begin position="234"/>
        <end position="240"/>
    </location>
</feature>
<feature type="helix" evidence="10">
    <location>
        <begin position="242"/>
        <end position="246"/>
    </location>
</feature>
<feature type="helix" evidence="10">
    <location>
        <begin position="251"/>
        <end position="262"/>
    </location>
</feature>
<feature type="helix" evidence="10">
    <location>
        <begin position="266"/>
        <end position="270"/>
    </location>
</feature>
<feature type="helix" evidence="10">
    <location>
        <begin position="274"/>
        <end position="278"/>
    </location>
</feature>
<feature type="strand" evidence="10">
    <location>
        <begin position="283"/>
        <end position="288"/>
    </location>
</feature>
<feature type="strand" evidence="10">
    <location>
        <begin position="294"/>
        <end position="296"/>
    </location>
</feature>
<feature type="helix" evidence="10">
    <location>
        <begin position="298"/>
        <end position="305"/>
    </location>
</feature>
<feature type="helix" evidence="10">
    <location>
        <begin position="321"/>
        <end position="326"/>
    </location>
</feature>
<feature type="helix" evidence="10">
    <location>
        <begin position="330"/>
        <end position="344"/>
    </location>
</feature>
<comment type="function">
    <text evidence="2">Esterase that catalyzes the hydrolysis of ethyl acetate (PubMed:17351032). Involved in the degradation of short chain methyl ketones (MEK) such as 2-butanone and 2-hexanone (PubMed:17351032). In vitro, can also hydrolyze vinyl acetate, 4-nitrophenyl acetate, methyl acetate, propyl acetate, benzyl acetate and methyl propionate (PubMed:17351032). The highest activities are obtained with acetic acid esters, but the alcohol group also plays an important role, as compounds with two carbon atoms in the alcohol moiety, i.e., vinyl and ethyl acetate, are by far the preferred substrates (PubMed:17351032).</text>
</comment>
<comment type="catalytic activity">
    <reaction evidence="2">
        <text>ethyl acetate + H2O = ethanol + acetate + H(+)</text>
        <dbReference type="Rhea" id="RHEA:58148"/>
        <dbReference type="ChEBI" id="CHEBI:15377"/>
        <dbReference type="ChEBI" id="CHEBI:15378"/>
        <dbReference type="ChEBI" id="CHEBI:16236"/>
        <dbReference type="ChEBI" id="CHEBI:27750"/>
        <dbReference type="ChEBI" id="CHEBI:30089"/>
        <dbReference type="EC" id="3.1.1.113"/>
    </reaction>
    <physiologicalReaction direction="left-to-right" evidence="2">
        <dbReference type="Rhea" id="RHEA:58149"/>
    </physiologicalReaction>
</comment>
<comment type="subunit">
    <text evidence="3">Homodimer.</text>
</comment>
<comment type="domain">
    <text evidence="3">The 3D structure excludes the ability of the enzyme to bind homoserine and acetyl-CoA, indicating that it cannot function as a homoserine acetyltransferase.</text>
</comment>
<comment type="disruption phenotype">
    <text evidence="2">Inactivation of the gene abolishes growth on 2-butanone and 2-hexanol (PubMed:17351032). Mutant accumulates ethyl acetate (PubMed:17351032).</text>
</comment>
<comment type="similarity">
    <text evidence="6">Belongs to the AB hydrolase superfamily. Acetyl esterase family.</text>
</comment>
<evidence type="ECO:0000255" key="1"/>
<evidence type="ECO:0000269" key="2">
    <source>
    </source>
</evidence>
<evidence type="ECO:0000269" key="3">
    <source>
    </source>
</evidence>
<evidence type="ECO:0000303" key="4">
    <source>
    </source>
</evidence>
<evidence type="ECO:0000305" key="5"/>
<evidence type="ECO:0000305" key="6">
    <source>
    </source>
</evidence>
<evidence type="ECO:0007744" key="7">
    <source>
        <dbReference type="PDB" id="5E4Y"/>
    </source>
</evidence>
<evidence type="ECO:0007744" key="8">
    <source>
        <dbReference type="PDB" id="5EFZ"/>
    </source>
</evidence>
<evidence type="ECO:0007829" key="9">
    <source>
        <dbReference type="PDB" id="5E4Y"/>
    </source>
</evidence>
<evidence type="ECO:0007829" key="10">
    <source>
        <dbReference type="PDB" id="5EFZ"/>
    </source>
</evidence>
<reference key="1">
    <citation type="journal article" date="2007" name="J. Bacteriol.">
        <title>Degradation of alkyl methyl ketones by Pseudomonas veronii MEK700.</title>
        <authorList>
            <person name="Onaca C."/>
            <person name="Kieninger M."/>
            <person name="Engesser K.H."/>
            <person name="Altenbuchner J."/>
        </authorList>
    </citation>
    <scope>NUCLEOTIDE SEQUENCE [GENOMIC DNA]</scope>
    <scope>FUNCTION</scope>
    <scope>CATALYTIC ACTIVITY</scope>
    <scope>DISRUPTION PHENOTYPE</scope>
    <source>
        <strain>MEK700</strain>
    </source>
</reference>
<reference evidence="7 8" key="2">
    <citation type="journal article" date="2016" name="FEBS Lett.">
        <title>A novel esterase subfamily with alpha/beta-hydrolase fold suggested by structures of two bacterial enzymes homologous to L-homoserine O-acetyl transferases.</title>
        <authorList>
            <person name="Tolzer C."/>
            <person name="Pal S."/>
            <person name="Watzlawick H."/>
            <person name="Altenbuchner J."/>
            <person name="Niefind K."/>
        </authorList>
    </citation>
    <scope>X-RAY CRYSTALLOGRAPHY (1.82 ANGSTROMS) OF 2-349</scope>
    <scope>SUBUNIT</scope>
    <scope>DOMAIN</scope>
    <scope>ACTIVE SITE</scope>
</reference>
<dbReference type="EC" id="3.1.1.113" evidence="2"/>
<dbReference type="EMBL" id="DQ855566">
    <property type="protein sequence ID" value="ABI15712.1"/>
    <property type="molecule type" value="Genomic_DNA"/>
</dbReference>
<dbReference type="PDB" id="5E4Y">
    <property type="method" value="X-ray"/>
    <property type="resolution" value="2.80 A"/>
    <property type="chains" value="A/B=2-349"/>
</dbReference>
<dbReference type="PDB" id="5EFZ">
    <property type="method" value="X-ray"/>
    <property type="resolution" value="1.82 A"/>
    <property type="chains" value="A/B/C/D/E/F=2-349"/>
</dbReference>
<dbReference type="PDBsum" id="5E4Y"/>
<dbReference type="PDBsum" id="5EFZ"/>
<dbReference type="SMR" id="Q0MRG5"/>
<dbReference type="MINT" id="Q0MRG5"/>
<dbReference type="ESTHER" id="9psed-q0mrg5">
    <property type="family name" value="Homoserine_transacetylase_like_est"/>
</dbReference>
<dbReference type="KEGG" id="ag:ABI15712"/>
<dbReference type="BioCyc" id="MetaCyc:MONOMER-19818"/>
<dbReference type="BRENDA" id="3.1.1.113">
    <property type="organism ID" value="15023"/>
</dbReference>
<dbReference type="EvolutionaryTrace" id="Q0MRG5"/>
<dbReference type="GO" id="GO:0016747">
    <property type="term" value="F:acyltransferase activity, transferring groups other than amino-acyl groups"/>
    <property type="evidence" value="ECO:0007669"/>
    <property type="project" value="InterPro"/>
</dbReference>
<dbReference type="GO" id="GO:0016787">
    <property type="term" value="F:hydrolase activity"/>
    <property type="evidence" value="ECO:0007669"/>
    <property type="project" value="UniProtKB-KW"/>
</dbReference>
<dbReference type="GO" id="GO:0009058">
    <property type="term" value="P:biosynthetic process"/>
    <property type="evidence" value="ECO:0007669"/>
    <property type="project" value="InterPro"/>
</dbReference>
<dbReference type="Gene3D" id="3.40.50.1820">
    <property type="entry name" value="alpha/beta hydrolase"/>
    <property type="match status" value="1"/>
</dbReference>
<dbReference type="InterPro" id="IPR000073">
    <property type="entry name" value="AB_hydrolase_1"/>
</dbReference>
<dbReference type="InterPro" id="IPR029058">
    <property type="entry name" value="AB_hydrolase_fold"/>
</dbReference>
<dbReference type="InterPro" id="IPR008220">
    <property type="entry name" value="HAT_MetX-like"/>
</dbReference>
<dbReference type="NCBIfam" id="NF005757">
    <property type="entry name" value="PRK07581.1"/>
    <property type="match status" value="1"/>
</dbReference>
<dbReference type="PANTHER" id="PTHR32268:SF15">
    <property type="entry name" value="HOMOSERINE ACETYLTRANSFERASE FAMILY PROTEIN (AFU_ORTHOLOGUE AFUA_1G15350)"/>
    <property type="match status" value="1"/>
</dbReference>
<dbReference type="PANTHER" id="PTHR32268">
    <property type="entry name" value="HOMOSERINE O-ACETYLTRANSFERASE"/>
    <property type="match status" value="1"/>
</dbReference>
<dbReference type="Pfam" id="PF00561">
    <property type="entry name" value="Abhydrolase_1"/>
    <property type="match status" value="1"/>
</dbReference>
<dbReference type="PIRSF" id="PIRSF000443">
    <property type="entry name" value="Homoser_Ac_trans"/>
    <property type="match status" value="1"/>
</dbReference>
<dbReference type="SUPFAM" id="SSF53474">
    <property type="entry name" value="alpha/beta-Hydrolases"/>
    <property type="match status" value="1"/>
</dbReference>